<organism>
    <name type="scientific">Herpetosiphon aurantiacus (strain ATCC 23779 / DSM 785 / 114-95)</name>
    <dbReference type="NCBI Taxonomy" id="316274"/>
    <lineage>
        <taxon>Bacteria</taxon>
        <taxon>Bacillati</taxon>
        <taxon>Chloroflexota</taxon>
        <taxon>Chloroflexia</taxon>
        <taxon>Herpetosiphonales</taxon>
        <taxon>Herpetosiphonaceae</taxon>
        <taxon>Herpetosiphon</taxon>
    </lineage>
</organism>
<keyword id="KW-0067">ATP-binding</keyword>
<keyword id="KW-0238">DNA-binding</keyword>
<keyword id="KW-0479">Metal-binding</keyword>
<keyword id="KW-0547">Nucleotide-binding</keyword>
<keyword id="KW-0678">Repressor</keyword>
<keyword id="KW-0804">Transcription</keyword>
<keyword id="KW-0805">Transcription regulation</keyword>
<keyword id="KW-0862">Zinc</keyword>
<keyword id="KW-0863">Zinc-finger</keyword>
<proteinExistence type="inferred from homology"/>
<comment type="function">
    <text evidence="1">Negatively regulates transcription of bacterial ribonucleotide reductase nrd genes and operons by binding to NrdR-boxes.</text>
</comment>
<comment type="cofactor">
    <cofactor evidence="1">
        <name>Zn(2+)</name>
        <dbReference type="ChEBI" id="CHEBI:29105"/>
    </cofactor>
    <text evidence="1">Binds 1 zinc ion.</text>
</comment>
<comment type="similarity">
    <text evidence="1">Belongs to the NrdR family.</text>
</comment>
<name>NRDR_HERA2</name>
<dbReference type="EMBL" id="CP000875">
    <property type="protein sequence ID" value="ABX04227.1"/>
    <property type="molecule type" value="Genomic_DNA"/>
</dbReference>
<dbReference type="SMR" id="A9B4R2"/>
<dbReference type="FunCoup" id="A9B4R2">
    <property type="interactions" value="230"/>
</dbReference>
<dbReference type="STRING" id="316274.Haur_1584"/>
<dbReference type="KEGG" id="hau:Haur_1584"/>
<dbReference type="eggNOG" id="COG1327">
    <property type="taxonomic scope" value="Bacteria"/>
</dbReference>
<dbReference type="HOGENOM" id="CLU_108412_0_0_0"/>
<dbReference type="InParanoid" id="A9B4R2"/>
<dbReference type="Proteomes" id="UP000000787">
    <property type="component" value="Chromosome"/>
</dbReference>
<dbReference type="GO" id="GO:0005524">
    <property type="term" value="F:ATP binding"/>
    <property type="evidence" value="ECO:0007669"/>
    <property type="project" value="UniProtKB-KW"/>
</dbReference>
<dbReference type="GO" id="GO:0003677">
    <property type="term" value="F:DNA binding"/>
    <property type="evidence" value="ECO:0007669"/>
    <property type="project" value="UniProtKB-KW"/>
</dbReference>
<dbReference type="GO" id="GO:0008270">
    <property type="term" value="F:zinc ion binding"/>
    <property type="evidence" value="ECO:0007669"/>
    <property type="project" value="UniProtKB-KW"/>
</dbReference>
<dbReference type="GO" id="GO:0045892">
    <property type="term" value="P:negative regulation of DNA-templated transcription"/>
    <property type="evidence" value="ECO:0007669"/>
    <property type="project" value="UniProtKB-UniRule"/>
</dbReference>
<dbReference type="HAMAP" id="MF_00440">
    <property type="entry name" value="NrdR"/>
    <property type="match status" value="1"/>
</dbReference>
<dbReference type="InterPro" id="IPR005144">
    <property type="entry name" value="ATP-cone_dom"/>
</dbReference>
<dbReference type="InterPro" id="IPR055173">
    <property type="entry name" value="NrdR-like_N"/>
</dbReference>
<dbReference type="InterPro" id="IPR003796">
    <property type="entry name" value="RNR_NrdR-like"/>
</dbReference>
<dbReference type="NCBIfam" id="TIGR00244">
    <property type="entry name" value="transcriptional regulator NrdR"/>
    <property type="match status" value="1"/>
</dbReference>
<dbReference type="PANTHER" id="PTHR30455">
    <property type="entry name" value="TRANSCRIPTIONAL REPRESSOR NRDR"/>
    <property type="match status" value="1"/>
</dbReference>
<dbReference type="PANTHER" id="PTHR30455:SF2">
    <property type="entry name" value="TRANSCRIPTIONAL REPRESSOR NRDR"/>
    <property type="match status" value="1"/>
</dbReference>
<dbReference type="Pfam" id="PF03477">
    <property type="entry name" value="ATP-cone"/>
    <property type="match status" value="1"/>
</dbReference>
<dbReference type="Pfam" id="PF22811">
    <property type="entry name" value="Zn_ribbon_NrdR"/>
    <property type="match status" value="1"/>
</dbReference>
<dbReference type="PROSITE" id="PS51161">
    <property type="entry name" value="ATP_CONE"/>
    <property type="match status" value="1"/>
</dbReference>
<evidence type="ECO:0000255" key="1">
    <source>
        <dbReference type="HAMAP-Rule" id="MF_00440"/>
    </source>
</evidence>
<accession>A9B4R2</accession>
<sequence length="150" mass="17383">MRCPYCTGESAVIDTRELDNGETIRRRRRCKHCDRRFTTYERVESVNVMVVKKNGDREPYDREKLLRGLRVAAYKRPISADVIDTLVTEVEAALIAYDALEVPSSVIGEQVMERLRSLDEVAYIRFASVYRSFSDLGKLREAVEELMEKE</sequence>
<protein>
    <recommendedName>
        <fullName evidence="1">Transcriptional repressor NrdR</fullName>
    </recommendedName>
</protein>
<feature type="chain" id="PRO_1000124514" description="Transcriptional repressor NrdR">
    <location>
        <begin position="1"/>
        <end position="150"/>
    </location>
</feature>
<feature type="domain" description="ATP-cone" evidence="1">
    <location>
        <begin position="48"/>
        <end position="138"/>
    </location>
</feature>
<feature type="zinc finger region" evidence="1">
    <location>
        <begin position="3"/>
        <end position="33"/>
    </location>
</feature>
<gene>
    <name evidence="1" type="primary">nrdR</name>
    <name type="ordered locus">Haur_1584</name>
</gene>
<reference key="1">
    <citation type="journal article" date="2011" name="Stand. Genomic Sci.">
        <title>Complete genome sequence of the filamentous gliding predatory bacterium Herpetosiphon aurantiacus type strain (114-95(T)).</title>
        <authorList>
            <person name="Kiss H."/>
            <person name="Nett M."/>
            <person name="Domin N."/>
            <person name="Martin K."/>
            <person name="Maresca J.A."/>
            <person name="Copeland A."/>
            <person name="Lapidus A."/>
            <person name="Lucas S."/>
            <person name="Berry K.W."/>
            <person name="Glavina Del Rio T."/>
            <person name="Dalin E."/>
            <person name="Tice H."/>
            <person name="Pitluck S."/>
            <person name="Richardson P."/>
            <person name="Bruce D."/>
            <person name="Goodwin L."/>
            <person name="Han C."/>
            <person name="Detter J.C."/>
            <person name="Schmutz J."/>
            <person name="Brettin T."/>
            <person name="Land M."/>
            <person name="Hauser L."/>
            <person name="Kyrpides N.C."/>
            <person name="Ivanova N."/>
            <person name="Goeker M."/>
            <person name="Woyke T."/>
            <person name="Klenk H.P."/>
            <person name="Bryant D.A."/>
        </authorList>
    </citation>
    <scope>NUCLEOTIDE SEQUENCE [LARGE SCALE GENOMIC DNA]</scope>
    <source>
        <strain>ATCC 23779 / DSM 785 / 114-95</strain>
    </source>
</reference>